<accession>A7H1A3</accession>
<gene>
    <name evidence="1" type="primary">rnhB</name>
    <name type="ordered locus">JJD26997_0010</name>
</gene>
<dbReference type="EC" id="3.1.26.4" evidence="1"/>
<dbReference type="EMBL" id="CP000768">
    <property type="protein sequence ID" value="ABS43335.1"/>
    <property type="molecule type" value="Genomic_DNA"/>
</dbReference>
<dbReference type="SMR" id="A7H1A3"/>
<dbReference type="KEGG" id="cjd:JJD26997_0010"/>
<dbReference type="HOGENOM" id="CLU_036532_3_1_7"/>
<dbReference type="Proteomes" id="UP000002302">
    <property type="component" value="Chromosome"/>
</dbReference>
<dbReference type="GO" id="GO:0005737">
    <property type="term" value="C:cytoplasm"/>
    <property type="evidence" value="ECO:0007669"/>
    <property type="project" value="UniProtKB-SubCell"/>
</dbReference>
<dbReference type="GO" id="GO:0032299">
    <property type="term" value="C:ribonuclease H2 complex"/>
    <property type="evidence" value="ECO:0007669"/>
    <property type="project" value="TreeGrafter"/>
</dbReference>
<dbReference type="GO" id="GO:0030145">
    <property type="term" value="F:manganese ion binding"/>
    <property type="evidence" value="ECO:0007669"/>
    <property type="project" value="UniProtKB-UniRule"/>
</dbReference>
<dbReference type="GO" id="GO:0003723">
    <property type="term" value="F:RNA binding"/>
    <property type="evidence" value="ECO:0007669"/>
    <property type="project" value="InterPro"/>
</dbReference>
<dbReference type="GO" id="GO:0004523">
    <property type="term" value="F:RNA-DNA hybrid ribonuclease activity"/>
    <property type="evidence" value="ECO:0007669"/>
    <property type="project" value="UniProtKB-UniRule"/>
</dbReference>
<dbReference type="GO" id="GO:0043137">
    <property type="term" value="P:DNA replication, removal of RNA primer"/>
    <property type="evidence" value="ECO:0007669"/>
    <property type="project" value="TreeGrafter"/>
</dbReference>
<dbReference type="GO" id="GO:0006298">
    <property type="term" value="P:mismatch repair"/>
    <property type="evidence" value="ECO:0007669"/>
    <property type="project" value="TreeGrafter"/>
</dbReference>
<dbReference type="CDD" id="cd07182">
    <property type="entry name" value="RNase_HII_bacteria_HII_like"/>
    <property type="match status" value="1"/>
</dbReference>
<dbReference type="Gene3D" id="3.30.420.10">
    <property type="entry name" value="Ribonuclease H-like superfamily/Ribonuclease H"/>
    <property type="match status" value="1"/>
</dbReference>
<dbReference type="HAMAP" id="MF_00052_B">
    <property type="entry name" value="RNase_HII_B"/>
    <property type="match status" value="1"/>
</dbReference>
<dbReference type="InterPro" id="IPR022898">
    <property type="entry name" value="RNase_HII"/>
</dbReference>
<dbReference type="InterPro" id="IPR001352">
    <property type="entry name" value="RNase_HII/HIII"/>
</dbReference>
<dbReference type="InterPro" id="IPR024567">
    <property type="entry name" value="RNase_HII/HIII_dom"/>
</dbReference>
<dbReference type="InterPro" id="IPR012337">
    <property type="entry name" value="RNaseH-like_sf"/>
</dbReference>
<dbReference type="InterPro" id="IPR036397">
    <property type="entry name" value="RNaseH_sf"/>
</dbReference>
<dbReference type="NCBIfam" id="NF000595">
    <property type="entry name" value="PRK00015.1-3"/>
    <property type="match status" value="1"/>
</dbReference>
<dbReference type="PANTHER" id="PTHR10954:SF23">
    <property type="entry name" value="RIBONUCLEASE"/>
    <property type="match status" value="1"/>
</dbReference>
<dbReference type="PANTHER" id="PTHR10954">
    <property type="entry name" value="RIBONUCLEASE H2 SUBUNIT A"/>
    <property type="match status" value="1"/>
</dbReference>
<dbReference type="Pfam" id="PF01351">
    <property type="entry name" value="RNase_HII"/>
    <property type="match status" value="1"/>
</dbReference>
<dbReference type="SUPFAM" id="SSF53098">
    <property type="entry name" value="Ribonuclease H-like"/>
    <property type="match status" value="1"/>
</dbReference>
<dbReference type="PROSITE" id="PS51975">
    <property type="entry name" value="RNASE_H_2"/>
    <property type="match status" value="1"/>
</dbReference>
<keyword id="KW-0963">Cytoplasm</keyword>
<keyword id="KW-0255">Endonuclease</keyword>
<keyword id="KW-0378">Hydrolase</keyword>
<keyword id="KW-0464">Manganese</keyword>
<keyword id="KW-0479">Metal-binding</keyword>
<keyword id="KW-0540">Nuclease</keyword>
<comment type="function">
    <text evidence="1">Endonuclease that specifically degrades the RNA of RNA-DNA hybrids.</text>
</comment>
<comment type="catalytic activity">
    <reaction evidence="1">
        <text>Endonucleolytic cleavage to 5'-phosphomonoester.</text>
        <dbReference type="EC" id="3.1.26.4"/>
    </reaction>
</comment>
<comment type="cofactor">
    <cofactor evidence="1">
        <name>Mn(2+)</name>
        <dbReference type="ChEBI" id="CHEBI:29035"/>
    </cofactor>
    <cofactor evidence="1">
        <name>Mg(2+)</name>
        <dbReference type="ChEBI" id="CHEBI:18420"/>
    </cofactor>
    <text evidence="1">Manganese or magnesium. Binds 1 divalent metal ion per monomer in the absence of substrate. May bind a second metal ion after substrate binding.</text>
</comment>
<comment type="subcellular location">
    <subcellularLocation>
        <location evidence="1">Cytoplasm</location>
    </subcellularLocation>
</comment>
<comment type="similarity">
    <text evidence="1">Belongs to the RNase HII family.</text>
</comment>
<proteinExistence type="inferred from homology"/>
<protein>
    <recommendedName>
        <fullName evidence="1">Ribonuclease HII</fullName>
        <shortName evidence="1">RNase HII</shortName>
        <ecNumber evidence="1">3.1.26.4</ecNumber>
    </recommendedName>
</protein>
<feature type="chain" id="PRO_1000031131" description="Ribonuclease HII">
    <location>
        <begin position="1"/>
        <end position="191"/>
    </location>
</feature>
<feature type="domain" description="RNase H type-2" evidence="2">
    <location>
        <begin position="16"/>
        <end position="191"/>
    </location>
</feature>
<feature type="binding site" evidence="1">
    <location>
        <position position="22"/>
    </location>
    <ligand>
        <name>a divalent metal cation</name>
        <dbReference type="ChEBI" id="CHEBI:60240"/>
    </ligand>
</feature>
<feature type="binding site" evidence="1">
    <location>
        <position position="23"/>
    </location>
    <ligand>
        <name>a divalent metal cation</name>
        <dbReference type="ChEBI" id="CHEBI:60240"/>
    </ligand>
</feature>
<feature type="binding site" evidence="1">
    <location>
        <position position="110"/>
    </location>
    <ligand>
        <name>a divalent metal cation</name>
        <dbReference type="ChEBI" id="CHEBI:60240"/>
    </ligand>
</feature>
<name>RNH2_CAMJD</name>
<organism>
    <name type="scientific">Campylobacter jejuni subsp. doylei (strain ATCC BAA-1458 / RM4099 / 269.97)</name>
    <dbReference type="NCBI Taxonomy" id="360109"/>
    <lineage>
        <taxon>Bacteria</taxon>
        <taxon>Pseudomonadati</taxon>
        <taxon>Campylobacterota</taxon>
        <taxon>Epsilonproteobacteria</taxon>
        <taxon>Campylobacterales</taxon>
        <taxon>Campylobacteraceae</taxon>
        <taxon>Campylobacter</taxon>
    </lineage>
</organism>
<reference key="1">
    <citation type="submission" date="2007-07" db="EMBL/GenBank/DDBJ databases">
        <title>Complete genome sequence of Campylobacter jejuni subsp doylei 269.97 isolated from human blood.</title>
        <authorList>
            <person name="Fouts D.E."/>
            <person name="Mongodin E.F."/>
            <person name="Puiu D."/>
            <person name="Sebastian Y."/>
            <person name="Miller W.G."/>
            <person name="Mandrell R.E."/>
            <person name="Lastovica A.J."/>
            <person name="Nelson K.E."/>
        </authorList>
    </citation>
    <scope>NUCLEOTIDE SEQUENCE [LARGE SCALE GENOMIC DNA]</scope>
    <source>
        <strain>ATCC BAA-1458 / RM4099 / 269.97</strain>
    </source>
</reference>
<sequence length="191" mass="21377">MKTLFDTKELLNEFDINLIGIDEAGRGALAGPMMMAACKLNKKLDGLCDSKKLSEKKREELYEIIIKNSNYLILAFSSEQIDTLGLSTCLKTGLKLIKKHFKAENNFLYDGNTNLGINGIKTQIKADTSILQVSAASILAKVSKDKVMNFLAKDFPCYEFEKNKAYGTKAHKEVIAKFGICKLHRKSFKLL</sequence>
<evidence type="ECO:0000255" key="1">
    <source>
        <dbReference type="HAMAP-Rule" id="MF_00052"/>
    </source>
</evidence>
<evidence type="ECO:0000255" key="2">
    <source>
        <dbReference type="PROSITE-ProRule" id="PRU01319"/>
    </source>
</evidence>